<keyword id="KW-0002">3D-structure</keyword>
<keyword id="KW-0007">Acetylation</keyword>
<keyword id="KW-0067">ATP-binding</keyword>
<keyword id="KW-0963">Cytoplasm</keyword>
<keyword id="KW-0903">Direct protein sequencing</keyword>
<keyword id="KW-0225">Disease variant</keyword>
<keyword id="KW-0360">Hereditary hemolytic anemia</keyword>
<keyword id="KW-0418">Kinase</keyword>
<keyword id="KW-0547">Nucleotide-binding</keyword>
<keyword id="KW-0597">Phosphoprotein</keyword>
<keyword id="KW-1267">Proteomics identification</keyword>
<keyword id="KW-1185">Reference proteome</keyword>
<keyword id="KW-0808">Transferase</keyword>
<organism>
    <name type="scientific">Homo sapiens</name>
    <name type="common">Human</name>
    <dbReference type="NCBI Taxonomy" id="9606"/>
    <lineage>
        <taxon>Eukaryota</taxon>
        <taxon>Metazoa</taxon>
        <taxon>Chordata</taxon>
        <taxon>Craniata</taxon>
        <taxon>Vertebrata</taxon>
        <taxon>Euteleostomi</taxon>
        <taxon>Mammalia</taxon>
        <taxon>Eutheria</taxon>
        <taxon>Euarchontoglires</taxon>
        <taxon>Primates</taxon>
        <taxon>Haplorrhini</taxon>
        <taxon>Catarrhini</taxon>
        <taxon>Hominidae</taxon>
        <taxon>Homo</taxon>
    </lineage>
</organism>
<comment type="function">
    <text evidence="1 2 5 6 7">Catalyzes the reversible transfer of the terminal phosphate group between ATP and AMP. Also displays broad nucleoside diphosphate kinase activity. Plays an important role in cellular energy homeostasis and in adenine nucleotide metabolism (By similarity) (PubMed:21080915, PubMed:23416111, PubMed:2542324). Also catalyzes at a very low rate the synthesis of thiamine triphosphate (ThTP) from thiamine diphosphate (ThDP) and ADP (By similarity).</text>
</comment>
<comment type="catalytic activity">
    <reaction evidence="6">
        <text>a ribonucleoside 5'-phosphate + ATP = a ribonucleoside 5'-diphosphate + ADP</text>
        <dbReference type="Rhea" id="RHEA:24036"/>
        <dbReference type="ChEBI" id="CHEBI:30616"/>
        <dbReference type="ChEBI" id="CHEBI:57930"/>
        <dbReference type="ChEBI" id="CHEBI:58043"/>
        <dbReference type="ChEBI" id="CHEBI:456216"/>
        <dbReference type="EC" id="2.7.4.4"/>
    </reaction>
</comment>
<comment type="catalytic activity">
    <reaction evidence="2 5 7">
        <text>AMP + ATP = 2 ADP</text>
        <dbReference type="Rhea" id="RHEA:12973"/>
        <dbReference type="ChEBI" id="CHEBI:30616"/>
        <dbReference type="ChEBI" id="CHEBI:456215"/>
        <dbReference type="ChEBI" id="CHEBI:456216"/>
        <dbReference type="EC" id="2.7.4.3"/>
    </reaction>
</comment>
<comment type="catalytic activity">
    <reaction evidence="5">
        <text>dAMP + ATP = dADP + ADP</text>
        <dbReference type="Rhea" id="RHEA:23100"/>
        <dbReference type="ChEBI" id="CHEBI:30616"/>
        <dbReference type="ChEBI" id="CHEBI:57667"/>
        <dbReference type="ChEBI" id="CHEBI:58245"/>
        <dbReference type="ChEBI" id="CHEBI:456216"/>
    </reaction>
</comment>
<comment type="catalytic activity">
    <reaction evidence="1">
        <text>dATP + AMP = dADP + ADP</text>
        <dbReference type="Rhea" id="RHEA:79899"/>
        <dbReference type="ChEBI" id="CHEBI:57667"/>
        <dbReference type="ChEBI" id="CHEBI:61404"/>
        <dbReference type="ChEBI" id="CHEBI:456215"/>
        <dbReference type="ChEBI" id="CHEBI:456216"/>
    </reaction>
</comment>
<comment type="catalytic activity">
    <reaction evidence="1">
        <text>dAMP + dATP = 2 dADP</text>
        <dbReference type="Rhea" id="RHEA:78311"/>
        <dbReference type="ChEBI" id="CHEBI:57667"/>
        <dbReference type="ChEBI" id="CHEBI:58245"/>
        <dbReference type="ChEBI" id="CHEBI:61404"/>
    </reaction>
</comment>
<comment type="catalytic activity">
    <reaction evidence="2 6">
        <text>a 2'-deoxyribonucleoside 5'-diphosphate + ATP = a 2'-deoxyribonucleoside 5'-triphosphate + ADP</text>
        <dbReference type="Rhea" id="RHEA:44640"/>
        <dbReference type="ChEBI" id="CHEBI:30616"/>
        <dbReference type="ChEBI" id="CHEBI:61560"/>
        <dbReference type="ChEBI" id="CHEBI:73316"/>
        <dbReference type="ChEBI" id="CHEBI:456216"/>
        <dbReference type="EC" id="2.7.4.6"/>
    </reaction>
</comment>
<comment type="catalytic activity">
    <reaction evidence="6">
        <text>a ribonucleoside 5'-diphosphate + ATP = a ribonucleoside 5'-triphosphate + ADP</text>
        <dbReference type="Rhea" id="RHEA:18113"/>
        <dbReference type="ChEBI" id="CHEBI:30616"/>
        <dbReference type="ChEBI" id="CHEBI:57930"/>
        <dbReference type="ChEBI" id="CHEBI:61557"/>
        <dbReference type="ChEBI" id="CHEBI:456216"/>
        <dbReference type="EC" id="2.7.4.6"/>
    </reaction>
</comment>
<comment type="catalytic activity">
    <reaction evidence="6">
        <text>CDP + GTP = CTP + GDP</text>
        <dbReference type="Rhea" id="RHEA:79859"/>
        <dbReference type="ChEBI" id="CHEBI:37563"/>
        <dbReference type="ChEBI" id="CHEBI:37565"/>
        <dbReference type="ChEBI" id="CHEBI:58069"/>
        <dbReference type="ChEBI" id="CHEBI:58189"/>
    </reaction>
</comment>
<comment type="catalytic activity">
    <reaction evidence="6">
        <text>GDP + ATP = GTP + ADP</text>
        <dbReference type="Rhea" id="RHEA:27686"/>
        <dbReference type="ChEBI" id="CHEBI:30616"/>
        <dbReference type="ChEBI" id="CHEBI:37565"/>
        <dbReference type="ChEBI" id="CHEBI:58189"/>
        <dbReference type="ChEBI" id="CHEBI:456216"/>
        <dbReference type="EC" id="2.7.4.6"/>
    </reaction>
</comment>
<comment type="catalytic activity">
    <reaction evidence="6">
        <text>UDP + ATP = UTP + ADP</text>
        <dbReference type="Rhea" id="RHEA:25098"/>
        <dbReference type="ChEBI" id="CHEBI:30616"/>
        <dbReference type="ChEBI" id="CHEBI:46398"/>
        <dbReference type="ChEBI" id="CHEBI:58223"/>
        <dbReference type="ChEBI" id="CHEBI:456216"/>
        <dbReference type="EC" id="2.7.4.6"/>
    </reaction>
</comment>
<comment type="catalytic activity">
    <reaction evidence="6">
        <text>GTP + UDP = UTP + GDP</text>
        <dbReference type="Rhea" id="RHEA:79863"/>
        <dbReference type="ChEBI" id="CHEBI:37565"/>
        <dbReference type="ChEBI" id="CHEBI:46398"/>
        <dbReference type="ChEBI" id="CHEBI:58189"/>
        <dbReference type="ChEBI" id="CHEBI:58223"/>
    </reaction>
</comment>
<comment type="catalytic activity">
    <reaction evidence="6">
        <text>dTDP + GTP = dTTP + GDP</text>
        <dbReference type="Rhea" id="RHEA:79867"/>
        <dbReference type="ChEBI" id="CHEBI:37565"/>
        <dbReference type="ChEBI" id="CHEBI:37568"/>
        <dbReference type="ChEBI" id="CHEBI:58189"/>
        <dbReference type="ChEBI" id="CHEBI:58369"/>
    </reaction>
</comment>
<comment type="catalytic activity">
    <reaction evidence="6">
        <text>dCDP + GTP = dCTP + GDP</text>
        <dbReference type="Rhea" id="RHEA:79875"/>
        <dbReference type="ChEBI" id="CHEBI:37565"/>
        <dbReference type="ChEBI" id="CHEBI:58189"/>
        <dbReference type="ChEBI" id="CHEBI:58593"/>
        <dbReference type="ChEBI" id="CHEBI:61481"/>
    </reaction>
</comment>
<comment type="catalytic activity">
    <reaction evidence="6">
        <text>dGDP + ATP = dGTP + ADP</text>
        <dbReference type="Rhea" id="RHEA:27690"/>
        <dbReference type="ChEBI" id="CHEBI:30616"/>
        <dbReference type="ChEBI" id="CHEBI:58595"/>
        <dbReference type="ChEBI" id="CHEBI:61429"/>
        <dbReference type="ChEBI" id="CHEBI:456216"/>
        <dbReference type="EC" id="2.7.4.6"/>
    </reaction>
</comment>
<comment type="catalytic activity">
    <reaction evidence="6">
        <text>dADP + GTP = dATP + GDP</text>
        <dbReference type="Rhea" id="RHEA:79871"/>
        <dbReference type="ChEBI" id="CHEBI:37565"/>
        <dbReference type="ChEBI" id="CHEBI:57667"/>
        <dbReference type="ChEBI" id="CHEBI:58189"/>
        <dbReference type="ChEBI" id="CHEBI:61404"/>
    </reaction>
</comment>
<comment type="catalytic activity">
    <reaction evidence="1">
        <text>thiamine diphosphate + ADP = thiamine triphosphate + AMP</text>
        <dbReference type="Rhea" id="RHEA:69180"/>
        <dbReference type="ChEBI" id="CHEBI:58937"/>
        <dbReference type="ChEBI" id="CHEBI:58938"/>
        <dbReference type="ChEBI" id="CHEBI:456215"/>
        <dbReference type="ChEBI" id="CHEBI:456216"/>
    </reaction>
</comment>
<comment type="cofactor">
    <cofactor evidence="1">
        <name>Mg(2+)</name>
        <dbReference type="ChEBI" id="CHEBI:18420"/>
    </cofactor>
</comment>
<comment type="biophysicochemical properties">
    <kinetics>
        <KM evidence="5">2.4 mM for AMP (with ATP as phosphate donor)</KM>
        <KM evidence="5">18.1 mM for dAMP (with ATP as phosphate donor)</KM>
        <Vmax evidence="5">156.0 umol/min/ug enzyme for the phosphorylation of AMP</Vmax>
        <Vmax evidence="5">265.0 umol/min/ug enzyme for the phosphorylation of dAMP</Vmax>
    </kinetics>
</comment>
<comment type="subunit">
    <text evidence="2 9 10">Monomer.</text>
</comment>
<comment type="subcellular location">
    <subcellularLocation>
        <location evidence="1">Cytoplasm</location>
    </subcellularLocation>
</comment>
<comment type="domain">
    <text evidence="2 13 14">Consists of three domains, a large central CORE domain and two small peripheral domains, NMPbind and LID, which undergo movements during catalysis. The LID domain closes over the site of phosphoryl transfer upon ATP binding. Assembling and dissambling the active center during each catalytic cycle provides an effective means to prevent ATP hydrolysis.</text>
</comment>
<comment type="polymorphism">
    <text evidence="12">This enzyme represents the most common of at least five alleles.</text>
</comment>
<comment type="disease" evidence="3 7 8">
    <disease id="DI-01702">
        <name>Anemia, congenital, non-spherocytic hemolytic, 3</name>
        <acronym>CNSHA3</acronym>
        <description>An autosomal recessive disease characterized by hemolytic anemia and undetectable erythrocyte adenylate kinase activity.</description>
        <dbReference type="MIM" id="612631"/>
    </disease>
    <text>The disease is caused by variants affecting the gene represented in this entry.</text>
</comment>
<comment type="similarity">
    <text evidence="2">Belongs to the adenylate kinase family. AK1 subfamily.</text>
</comment>
<comment type="online information" name="Wikipedia">
    <link uri="https://en.wikipedia.org/wiki/Adenylate_kinase"/>
    <text>Adenylate kinase entry</text>
</comment>
<protein>
    <recommendedName>
        <fullName evidence="2">Adenylate kinase isoenzyme 1</fullName>
        <shortName evidence="2">AK 1</shortName>
        <ecNumber evidence="6">2.7.4.3</ecNumber>
        <ecNumber evidence="6">2.7.4.4</ecNumber>
        <ecNumber evidence="2 6">2.7.4.6</ecNumber>
    </recommendedName>
    <alternativeName>
        <fullName evidence="2">ATP-AMP transphosphorylase 1</fullName>
    </alternativeName>
    <alternativeName>
        <fullName evidence="2">ATP:AMP phosphotransferase</fullName>
    </alternativeName>
    <alternativeName>
        <fullName evidence="2">Adenylate monophosphate kinase</fullName>
    </alternativeName>
    <alternativeName>
        <fullName evidence="2">Myokinase</fullName>
    </alternativeName>
</protein>
<name>KAD1_HUMAN</name>
<sequence length="194" mass="21635">MEEKLKKTKIIFVVGGPGSGKGTQCEKIVQKYGYTHLSTGDLLRSEVSSGSARGKKLSEIMEKGQLVPLETVLDMLRDAMVAKVNTSKGFLIDGYPREVQQGEEFERRIGQPTLLLYVDAGPETMTQRLLKRGETSGRVDDNEETIKKRLETYYKATEPVIAFYEKRGIVRKVNAEGSVDSVFSQVCTHLDALK</sequence>
<gene>
    <name evidence="2 15" type="primary">AK1</name>
</gene>
<evidence type="ECO:0000250" key="1">
    <source>
        <dbReference type="UniProtKB" id="P05081"/>
    </source>
</evidence>
<evidence type="ECO:0000255" key="2">
    <source>
        <dbReference type="HAMAP-Rule" id="MF_03171"/>
    </source>
</evidence>
<evidence type="ECO:0000269" key="3">
    <source>
    </source>
</evidence>
<evidence type="ECO:0000269" key="4">
    <source>
    </source>
</evidence>
<evidence type="ECO:0000269" key="5">
    <source>
    </source>
</evidence>
<evidence type="ECO:0000269" key="6">
    <source>
    </source>
</evidence>
<evidence type="ECO:0000269" key="7">
    <source>
    </source>
</evidence>
<evidence type="ECO:0000269" key="8">
    <source>
    </source>
</evidence>
<evidence type="ECO:0000269" key="9">
    <source ref="12"/>
</evidence>
<evidence type="ECO:0000269" key="10">
    <source ref="13"/>
</evidence>
<evidence type="ECO:0000305" key="11"/>
<evidence type="ECO:0000305" key="12">
    <source>
    </source>
</evidence>
<evidence type="ECO:0000305" key="13">
    <source ref="12"/>
</evidence>
<evidence type="ECO:0000305" key="14">
    <source ref="13"/>
</evidence>
<evidence type="ECO:0000312" key="15">
    <source>
        <dbReference type="HGNC" id="HGNC:361"/>
    </source>
</evidence>
<evidence type="ECO:0007744" key="16">
    <source>
    </source>
</evidence>
<evidence type="ECO:0007744" key="17">
    <source>
    </source>
</evidence>
<evidence type="ECO:0007829" key="18">
    <source>
        <dbReference type="PDB" id="2C95"/>
    </source>
</evidence>
<accession>P00568</accession>
<accession>Q9BVK9</accession>
<accession>Q9UQC7</accession>
<dbReference type="EC" id="2.7.4.3" evidence="6"/>
<dbReference type="EC" id="2.7.4.4" evidence="6"/>
<dbReference type="EC" id="2.7.4.6" evidence="2 6"/>
<dbReference type="EMBL" id="J04809">
    <property type="protein sequence ID" value="AAA51686.1"/>
    <property type="molecule type" value="Genomic_DNA"/>
</dbReference>
<dbReference type="EMBL" id="AB021871">
    <property type="protein sequence ID" value="BAA78534.1"/>
    <property type="molecule type" value="mRNA"/>
</dbReference>
<dbReference type="EMBL" id="BT019580">
    <property type="protein sequence ID" value="AAV38387.1"/>
    <property type="molecule type" value="mRNA"/>
</dbReference>
<dbReference type="EMBL" id="BC001116">
    <property type="protein sequence ID" value="AAH01116.1"/>
    <property type="molecule type" value="mRNA"/>
</dbReference>
<dbReference type="CCDS" id="CCDS6881.1"/>
<dbReference type="PIR" id="A33508">
    <property type="entry name" value="KIHUA"/>
</dbReference>
<dbReference type="RefSeq" id="NP_000467.1">
    <property type="nucleotide sequence ID" value="NM_000476.3"/>
</dbReference>
<dbReference type="RefSeq" id="NP_001305050.1">
    <property type="nucleotide sequence ID" value="NM_001318121.1"/>
</dbReference>
<dbReference type="RefSeq" id="XP_016869916.1">
    <property type="nucleotide sequence ID" value="XM_017014427.1"/>
</dbReference>
<dbReference type="RefSeq" id="XP_016869917.1">
    <property type="nucleotide sequence ID" value="XM_017014428.1"/>
</dbReference>
<dbReference type="PDB" id="1Z83">
    <property type="method" value="X-ray"/>
    <property type="resolution" value="1.90 A"/>
    <property type="chains" value="A/B/C=1-193"/>
</dbReference>
<dbReference type="PDB" id="2C95">
    <property type="method" value="X-ray"/>
    <property type="resolution" value="1.71 A"/>
    <property type="chains" value="A/B=1-193"/>
</dbReference>
<dbReference type="PDB" id="7DE3">
    <property type="method" value="X-ray"/>
    <property type="resolution" value="2.20 A"/>
    <property type="chains" value="A=1-194"/>
</dbReference>
<dbReference type="PDB" id="7X7S">
    <property type="method" value="NMR"/>
    <property type="chains" value="A=1-194"/>
</dbReference>
<dbReference type="PDB" id="8X1G">
    <property type="method" value="NMR"/>
    <property type="chains" value="A=1-194"/>
</dbReference>
<dbReference type="PDBsum" id="1Z83"/>
<dbReference type="PDBsum" id="2C95"/>
<dbReference type="PDBsum" id="7DE3"/>
<dbReference type="PDBsum" id="7X7S"/>
<dbReference type="PDBsum" id="8X1G"/>
<dbReference type="BMRB" id="P00568"/>
<dbReference type="SMR" id="P00568"/>
<dbReference type="BioGRID" id="106706">
    <property type="interactions" value="65"/>
</dbReference>
<dbReference type="FunCoup" id="P00568">
    <property type="interactions" value="577"/>
</dbReference>
<dbReference type="IntAct" id="P00568">
    <property type="interactions" value="31"/>
</dbReference>
<dbReference type="STRING" id="9606.ENSP00000223836"/>
<dbReference type="ChEMBL" id="CHEMBL4925"/>
<dbReference type="DrugBank" id="DB00640">
    <property type="generic name" value="Adenosine"/>
</dbReference>
<dbReference type="DrugBank" id="DB01717">
    <property type="generic name" value="Bis(Adenosine)-5'-Pentaphosphate"/>
</dbReference>
<dbReference type="DrugBank" id="DB14126">
    <property type="generic name" value="Tenofovir"/>
</dbReference>
<dbReference type="DrugBank" id="DB09299">
    <property type="generic name" value="Tenofovir alafenamide"/>
</dbReference>
<dbReference type="GlyGen" id="P00568">
    <property type="glycosylation" value="1 site, 1 O-linked glycan (1 site)"/>
</dbReference>
<dbReference type="iPTMnet" id="P00568"/>
<dbReference type="MetOSite" id="P00568"/>
<dbReference type="PhosphoSitePlus" id="P00568"/>
<dbReference type="SwissPalm" id="P00568"/>
<dbReference type="BioMuta" id="AK1"/>
<dbReference type="DMDM" id="20178288"/>
<dbReference type="OGP" id="P00568"/>
<dbReference type="REPRODUCTION-2DPAGE" id="IPI00018342"/>
<dbReference type="jPOST" id="P00568"/>
<dbReference type="MassIVE" id="P00568"/>
<dbReference type="PaxDb" id="9606-ENSP00000362271"/>
<dbReference type="PeptideAtlas" id="P00568"/>
<dbReference type="ProteomicsDB" id="51267"/>
<dbReference type="Pumba" id="P00568"/>
<dbReference type="TopDownProteomics" id="P00568"/>
<dbReference type="Antibodypedia" id="1017">
    <property type="antibodies" value="638 antibodies from 36 providers"/>
</dbReference>
<dbReference type="DNASU" id="203"/>
<dbReference type="Ensembl" id="ENST00000373156.5">
    <property type="protein sequence ID" value="ENSP00000362249.1"/>
    <property type="gene ID" value="ENSG00000106992.19"/>
</dbReference>
<dbReference type="Ensembl" id="ENST00000644144.2">
    <property type="protein sequence ID" value="ENSP00000494600.1"/>
    <property type="gene ID" value="ENSG00000106992.19"/>
</dbReference>
<dbReference type="GeneID" id="203"/>
<dbReference type="KEGG" id="hsa:203"/>
<dbReference type="MANE-Select" id="ENST00000644144.2">
    <property type="protein sequence ID" value="ENSP00000494600.1"/>
    <property type="RefSeq nucleotide sequence ID" value="NM_000476.3"/>
    <property type="RefSeq protein sequence ID" value="NP_000467.1"/>
</dbReference>
<dbReference type="AGR" id="HGNC:361"/>
<dbReference type="CTD" id="203"/>
<dbReference type="DisGeNET" id="203"/>
<dbReference type="GeneCards" id="AK1"/>
<dbReference type="HGNC" id="HGNC:361">
    <property type="gene designation" value="AK1"/>
</dbReference>
<dbReference type="HPA" id="ENSG00000106992">
    <property type="expression patterns" value="Group enriched (choroid plexus, fallopian tube, heart muscle, skeletal muscle, tongue)"/>
</dbReference>
<dbReference type="MalaCards" id="AK1"/>
<dbReference type="MIM" id="103000">
    <property type="type" value="gene"/>
</dbReference>
<dbReference type="MIM" id="612631">
    <property type="type" value="phenotype"/>
</dbReference>
<dbReference type="neXtProt" id="NX_P00568"/>
<dbReference type="OpenTargets" id="ENSG00000106992"/>
<dbReference type="Orphanet" id="86817">
    <property type="disease" value="Hemolytic anemia due to adenylate kinase deficiency"/>
</dbReference>
<dbReference type="PharmGKB" id="PA24655"/>
<dbReference type="VEuPathDB" id="HostDB:ENSG00000106992"/>
<dbReference type="eggNOG" id="KOG3079">
    <property type="taxonomic scope" value="Eukaryota"/>
</dbReference>
<dbReference type="GeneTree" id="ENSGT00940000158325"/>
<dbReference type="HOGENOM" id="CLU_032354_0_3_1"/>
<dbReference type="InParanoid" id="P00568"/>
<dbReference type="OMA" id="GTQCDRM"/>
<dbReference type="OrthoDB" id="442176at2759"/>
<dbReference type="PAN-GO" id="P00568">
    <property type="GO annotations" value="5 GO annotations based on evolutionary models"/>
</dbReference>
<dbReference type="PhylomeDB" id="P00568"/>
<dbReference type="TreeFam" id="TF354283"/>
<dbReference type="BRENDA" id="2.7.4.3">
    <property type="organism ID" value="2681"/>
</dbReference>
<dbReference type="PathwayCommons" id="P00568"/>
<dbReference type="Reactome" id="R-HSA-499943">
    <property type="pathway name" value="Interconversion of nucleotide di- and triphosphates"/>
</dbReference>
<dbReference type="SABIO-RK" id="P00568"/>
<dbReference type="SignaLink" id="P00568"/>
<dbReference type="BioGRID-ORCS" id="203">
    <property type="hits" value="15 hits in 1191 CRISPR screens"/>
</dbReference>
<dbReference type="CD-CODE" id="FB4E32DD">
    <property type="entry name" value="Presynaptic clusters and postsynaptic densities"/>
</dbReference>
<dbReference type="EvolutionaryTrace" id="P00568"/>
<dbReference type="GenomeRNAi" id="203"/>
<dbReference type="Pharos" id="P00568">
    <property type="development level" value="Tbio"/>
</dbReference>
<dbReference type="PRO" id="PR:P00568"/>
<dbReference type="Proteomes" id="UP000005640">
    <property type="component" value="Chromosome 9"/>
</dbReference>
<dbReference type="RNAct" id="P00568">
    <property type="molecule type" value="protein"/>
</dbReference>
<dbReference type="Bgee" id="ENSG00000106992">
    <property type="expression patterns" value="Expressed in apex of heart and 100 other cell types or tissues"/>
</dbReference>
<dbReference type="ExpressionAtlas" id="P00568">
    <property type="expression patterns" value="baseline and differential"/>
</dbReference>
<dbReference type="GO" id="GO:0005737">
    <property type="term" value="C:cytoplasm"/>
    <property type="evidence" value="ECO:0000318"/>
    <property type="project" value="GO_Central"/>
</dbReference>
<dbReference type="GO" id="GO:0005829">
    <property type="term" value="C:cytosol"/>
    <property type="evidence" value="ECO:0000318"/>
    <property type="project" value="GO_Central"/>
</dbReference>
<dbReference type="GO" id="GO:0070062">
    <property type="term" value="C:extracellular exosome"/>
    <property type="evidence" value="ECO:0007005"/>
    <property type="project" value="UniProtKB"/>
</dbReference>
<dbReference type="GO" id="GO:0001520">
    <property type="term" value="C:outer dense fiber"/>
    <property type="evidence" value="ECO:0007669"/>
    <property type="project" value="Ensembl"/>
</dbReference>
<dbReference type="GO" id="GO:0004017">
    <property type="term" value="F:adenylate kinase activity"/>
    <property type="evidence" value="ECO:0000269"/>
    <property type="project" value="Reactome"/>
</dbReference>
<dbReference type="GO" id="GO:0005524">
    <property type="term" value="F:ATP binding"/>
    <property type="evidence" value="ECO:0007669"/>
    <property type="project" value="UniProtKB-KW"/>
</dbReference>
<dbReference type="GO" id="GO:0047506">
    <property type="term" value="F:deoxyadenylate kinase activity"/>
    <property type="evidence" value="ECO:0007669"/>
    <property type="project" value="RHEA"/>
</dbReference>
<dbReference type="GO" id="GO:0004550">
    <property type="term" value="F:nucleoside diphosphate kinase activity"/>
    <property type="evidence" value="ECO:0000314"/>
    <property type="project" value="UniProtKB"/>
</dbReference>
<dbReference type="GO" id="GO:0006172">
    <property type="term" value="P:ADP biosynthetic process"/>
    <property type="evidence" value="ECO:0007669"/>
    <property type="project" value="UniProtKB-UniRule"/>
</dbReference>
<dbReference type="GO" id="GO:0046033">
    <property type="term" value="P:AMP metabolic process"/>
    <property type="evidence" value="ECO:0007669"/>
    <property type="project" value="UniProtKB-UniRule"/>
</dbReference>
<dbReference type="GO" id="GO:0046034">
    <property type="term" value="P:ATP metabolic process"/>
    <property type="evidence" value="ECO:0007669"/>
    <property type="project" value="UniProtKB-UniRule"/>
</dbReference>
<dbReference type="GO" id="GO:0015949">
    <property type="term" value="P:nucleobase-containing small molecule interconversion"/>
    <property type="evidence" value="ECO:0000304"/>
    <property type="project" value="Reactome"/>
</dbReference>
<dbReference type="GO" id="GO:0009142">
    <property type="term" value="P:nucleoside triphosphate biosynthetic process"/>
    <property type="evidence" value="ECO:0007669"/>
    <property type="project" value="InterPro"/>
</dbReference>
<dbReference type="CDD" id="cd01428">
    <property type="entry name" value="ADK"/>
    <property type="match status" value="1"/>
</dbReference>
<dbReference type="FunFam" id="3.40.50.300:FF:000315">
    <property type="entry name" value="Adenylate kinase 1"/>
    <property type="match status" value="1"/>
</dbReference>
<dbReference type="Gene3D" id="3.40.50.300">
    <property type="entry name" value="P-loop containing nucleotide triphosphate hydrolases"/>
    <property type="match status" value="1"/>
</dbReference>
<dbReference type="HAMAP" id="MF_00235">
    <property type="entry name" value="Adenylate_kinase_Adk"/>
    <property type="match status" value="1"/>
</dbReference>
<dbReference type="HAMAP" id="MF_03171">
    <property type="entry name" value="Adenylate_kinase_AK1"/>
    <property type="match status" value="1"/>
</dbReference>
<dbReference type="InterPro" id="IPR000850">
    <property type="entry name" value="Adenylat/UMP-CMP_kin"/>
</dbReference>
<dbReference type="InterPro" id="IPR033690">
    <property type="entry name" value="Adenylat_kinase_CS"/>
</dbReference>
<dbReference type="InterPro" id="IPR028582">
    <property type="entry name" value="AK1"/>
</dbReference>
<dbReference type="InterPro" id="IPR006267">
    <property type="entry name" value="AK1/5"/>
</dbReference>
<dbReference type="InterPro" id="IPR027417">
    <property type="entry name" value="P-loop_NTPase"/>
</dbReference>
<dbReference type="NCBIfam" id="TIGR01360">
    <property type="entry name" value="aden_kin_iso1"/>
    <property type="match status" value="1"/>
</dbReference>
<dbReference type="NCBIfam" id="NF011100">
    <property type="entry name" value="PRK14527.1"/>
    <property type="match status" value="1"/>
</dbReference>
<dbReference type="PANTHER" id="PTHR23359">
    <property type="entry name" value="NUCLEOTIDE KINASE"/>
    <property type="match status" value="1"/>
</dbReference>
<dbReference type="Pfam" id="PF00406">
    <property type="entry name" value="ADK"/>
    <property type="match status" value="1"/>
</dbReference>
<dbReference type="PRINTS" id="PR00094">
    <property type="entry name" value="ADENYLTKNASE"/>
</dbReference>
<dbReference type="SUPFAM" id="SSF52540">
    <property type="entry name" value="P-loop containing nucleoside triphosphate hydrolases"/>
    <property type="match status" value="1"/>
</dbReference>
<dbReference type="PROSITE" id="PS00113">
    <property type="entry name" value="ADENYLATE_KINASE"/>
    <property type="match status" value="1"/>
</dbReference>
<proteinExistence type="evidence at protein level"/>
<feature type="chain" id="PRO_0000158910" description="Adenylate kinase isoenzyme 1">
    <location>
        <begin position="1"/>
        <end position="194"/>
    </location>
</feature>
<feature type="region of interest" description="NMP" evidence="2 9 10">
    <location>
        <begin position="38"/>
        <end position="67"/>
    </location>
</feature>
<feature type="region of interest" description="LID" evidence="2 9 10">
    <location>
        <begin position="131"/>
        <end position="141"/>
    </location>
</feature>
<feature type="binding site" evidence="2 9 10">
    <location>
        <begin position="18"/>
        <end position="23"/>
    </location>
    <ligand>
        <name>ATP</name>
        <dbReference type="ChEBI" id="CHEBI:30616"/>
    </ligand>
</feature>
<feature type="binding site" evidence="2 9 10">
    <location>
        <position position="39"/>
    </location>
    <ligand>
        <name>AMP</name>
        <dbReference type="ChEBI" id="CHEBI:456215"/>
    </ligand>
</feature>
<feature type="binding site" evidence="2 9 10">
    <location>
        <position position="44"/>
    </location>
    <ligand>
        <name>AMP</name>
        <dbReference type="ChEBI" id="CHEBI:456215"/>
    </ligand>
</feature>
<feature type="binding site" evidence="2 9 10">
    <location>
        <begin position="65"/>
        <end position="67"/>
    </location>
    <ligand>
        <name>AMP</name>
        <dbReference type="ChEBI" id="CHEBI:456215"/>
    </ligand>
</feature>
<feature type="binding site" evidence="2 9 10">
    <location>
        <begin position="94"/>
        <end position="97"/>
    </location>
    <ligand>
        <name>AMP</name>
        <dbReference type="ChEBI" id="CHEBI:456215"/>
    </ligand>
</feature>
<feature type="binding site" evidence="2 9 10">
    <location>
        <position position="101"/>
    </location>
    <ligand>
        <name>AMP</name>
        <dbReference type="ChEBI" id="CHEBI:456215"/>
    </ligand>
</feature>
<feature type="binding site" evidence="2 9 10">
    <location>
        <position position="132"/>
    </location>
    <ligand>
        <name>ATP</name>
        <dbReference type="ChEBI" id="CHEBI:30616"/>
    </ligand>
</feature>
<feature type="binding site" evidence="2 9 10">
    <location>
        <position position="138"/>
    </location>
    <ligand>
        <name>AMP</name>
        <dbReference type="ChEBI" id="CHEBI:456215"/>
    </ligand>
</feature>
<feature type="binding site" evidence="2 9 10">
    <location>
        <position position="149"/>
    </location>
    <ligand>
        <name>AMP</name>
        <dbReference type="ChEBI" id="CHEBI:456215"/>
    </ligand>
</feature>
<feature type="binding site" evidence="2 9 10">
    <location>
        <position position="177"/>
    </location>
    <ligand>
        <name>ATP</name>
        <dbReference type="ChEBI" id="CHEBI:30616"/>
    </ligand>
</feature>
<feature type="modified residue" description="N-acetylmethionine" evidence="2 4">
    <location>
        <position position="1"/>
    </location>
</feature>
<feature type="modified residue" description="Phosphoserine" evidence="16 17">
    <location>
        <position position="38"/>
    </location>
</feature>
<feature type="sequence variant" id="VAR_055337" description="In CNSHA3; dbSNP:rs137853204." evidence="3">
    <original>G</original>
    <variation>R</variation>
    <location>
        <position position="40"/>
    </location>
</feature>
<feature type="sequence variant" id="VAR_055338" description="In CNSHA3; dbSNP:rs137853205." evidence="3">
    <original>G</original>
    <variation>R</variation>
    <location>
        <position position="64"/>
    </location>
</feature>
<feature type="sequence variant" id="VAR_034046" description="In dbSNP:rs8192462.">
    <original>E</original>
    <variation>Q</variation>
    <location>
        <position position="123"/>
    </location>
</feature>
<feature type="sequence variant" id="VAR_004021" description="In CNSHA3; the same mutation in the chicken sequence shows reduced adenylate kinase activity; dbSNP:rs104894101." evidence="7">
    <original>R</original>
    <variation>W</variation>
    <location>
        <position position="128"/>
    </location>
</feature>
<feature type="sequence variant" id="VAR_055339" description="In CNSHA3." evidence="3">
    <location>
        <position position="140"/>
    </location>
</feature>
<feature type="sequence variant" id="VAR_055340" description="In CNSHA3; dbSNP:rs137853203." evidence="8">
    <original>Y</original>
    <variation>C</variation>
    <location>
        <position position="164"/>
    </location>
</feature>
<feature type="sequence conflict" description="In Ref. 5; AAH01116." evidence="11" ref="5">
    <original>K</original>
    <variation>N</variation>
    <location>
        <position position="9"/>
    </location>
</feature>
<feature type="sequence conflict" description="In Ref. 1; AA sequence." evidence="11" ref="1">
    <original>Q</original>
    <variation>R</variation>
    <location>
        <position position="127"/>
    </location>
</feature>
<feature type="sequence conflict" description="In Ref. 1; AA sequence." evidence="11" ref="1">
    <original>S</original>
    <variation>E</variation>
    <location>
        <position position="181"/>
    </location>
</feature>
<feature type="helix" evidence="18">
    <location>
        <begin position="1"/>
        <end position="5"/>
    </location>
</feature>
<feature type="strand" evidence="18">
    <location>
        <begin position="10"/>
        <end position="15"/>
    </location>
</feature>
<feature type="helix" evidence="18">
    <location>
        <begin position="21"/>
        <end position="32"/>
    </location>
</feature>
<feature type="strand" evidence="18">
    <location>
        <begin position="35"/>
        <end position="38"/>
    </location>
</feature>
<feature type="helix" evidence="18">
    <location>
        <begin position="39"/>
        <end position="48"/>
    </location>
</feature>
<feature type="helix" evidence="18">
    <location>
        <begin position="52"/>
        <end position="62"/>
    </location>
</feature>
<feature type="helix" evidence="18">
    <location>
        <begin position="69"/>
        <end position="83"/>
    </location>
</feature>
<feature type="turn" evidence="18">
    <location>
        <begin position="84"/>
        <end position="86"/>
    </location>
</feature>
<feature type="strand" evidence="18">
    <location>
        <begin position="90"/>
        <end position="94"/>
    </location>
</feature>
<feature type="helix" evidence="18">
    <location>
        <begin position="99"/>
        <end position="108"/>
    </location>
</feature>
<feature type="strand" evidence="18">
    <location>
        <begin position="113"/>
        <end position="119"/>
    </location>
</feature>
<feature type="helix" evidence="18">
    <location>
        <begin position="122"/>
        <end position="133"/>
    </location>
</feature>
<feature type="strand" evidence="18">
    <location>
        <begin position="135"/>
        <end position="137"/>
    </location>
</feature>
<feature type="helix" evidence="18">
    <location>
        <begin position="139"/>
        <end position="141"/>
    </location>
</feature>
<feature type="helix" evidence="18">
    <location>
        <begin position="143"/>
        <end position="156"/>
    </location>
</feature>
<feature type="helix" evidence="18">
    <location>
        <begin position="158"/>
        <end position="167"/>
    </location>
</feature>
<feature type="strand" evidence="18">
    <location>
        <begin position="170"/>
        <end position="174"/>
    </location>
</feature>
<feature type="helix" evidence="18">
    <location>
        <begin position="179"/>
        <end position="193"/>
    </location>
</feature>
<reference key="1">
    <citation type="journal article" date="1976" name="Eur. J. Biochem.">
        <title>Primary and tertiary structure of the principal human adenylate kinase.</title>
        <authorList>
            <person name="von Zabern I."/>
            <person name="Wittmann-Liebold B."/>
            <person name="Untucht-Grau R."/>
            <person name="Schirmer R.H."/>
            <person name="Pai E.F."/>
        </authorList>
    </citation>
    <scope>PROTEIN SEQUENCE</scope>
    <scope>ACETYLATION AT MET-1</scope>
    <source>
        <tissue>Skeletal muscle</tissue>
    </source>
</reference>
<reference key="2">
    <citation type="journal article" date="1989" name="J. Biol. Chem.">
        <title>Human adenylate kinase deficiency associated with hemolytic anemia. A single base substitution affecting solubility and catalytic activity of the cytosolic adenylate kinase.</title>
        <authorList>
            <person name="Matsuura S."/>
            <person name="Igarashi M."/>
            <person name="Tanizawa Y."/>
            <person name="Yamada M."/>
            <person name="Kishi F."/>
            <person name="Kajii T."/>
            <person name="Fujii H."/>
            <person name="Miwa S."/>
            <person name="Sakurai M."/>
            <person name="Nakazawa A."/>
        </authorList>
    </citation>
    <scope>NUCLEOTIDE SEQUENCE [GENOMIC DNA]</scope>
    <scope>VARIANT CNSHA3 TRP-128</scope>
    <scope>CHARACTERIZATION OF CNSHA3 TRP-128</scope>
    <scope>FUNCTION</scope>
    <scope>CATALYTIC ACTIVITY</scope>
</reference>
<reference key="3">
    <citation type="submission" date="1998-12" db="EMBL/GenBank/DDBJ databases">
        <authorList>
            <person name="Noma T."/>
        </authorList>
    </citation>
    <scope>NUCLEOTIDE SEQUENCE [MRNA]</scope>
    <source>
        <tissue>Retina</tissue>
    </source>
</reference>
<reference key="4">
    <citation type="submission" date="2003-05" db="EMBL/GenBank/DDBJ databases">
        <title>Cloning of human full-length CDSs in BD Creator(TM) system donor vector.</title>
        <authorList>
            <person name="Kalnine N."/>
            <person name="Chen X."/>
            <person name="Rolfs A."/>
            <person name="Halleck A."/>
            <person name="Hines L."/>
            <person name="Eisenstein S."/>
            <person name="Koundinya M."/>
            <person name="Raphael J."/>
            <person name="Moreira D."/>
            <person name="Kelley T."/>
            <person name="LaBaer J."/>
            <person name="Lin Y."/>
            <person name="Phelan M."/>
            <person name="Farmer A."/>
        </authorList>
    </citation>
    <scope>NUCLEOTIDE SEQUENCE [LARGE SCALE MRNA]</scope>
</reference>
<reference key="5">
    <citation type="journal article" date="2004" name="Genome Res.">
        <title>The status, quality, and expansion of the NIH full-length cDNA project: the Mammalian Gene Collection (MGC).</title>
        <authorList>
            <consortium name="The MGC Project Team"/>
        </authorList>
    </citation>
    <scope>NUCLEOTIDE SEQUENCE [LARGE SCALE MRNA]</scope>
    <source>
        <tissue>Colon</tissue>
    </source>
</reference>
<reference key="6">
    <citation type="submission" date="2008-12" db="UniProtKB">
        <authorList>
            <person name="Lubec G."/>
            <person name="Chen W.-Q."/>
            <person name="Sun Y."/>
        </authorList>
    </citation>
    <scope>PROTEIN SEQUENCE OF 10-21; 32-44; 64-77; 89-97; 108-128; 156-166 AND 172-194</scope>
    <scope>IDENTIFICATION BY MASS SPECTROMETRY</scope>
    <source>
        <tissue>Fetal brain cortex</tissue>
    </source>
</reference>
<reference key="7">
    <citation type="journal article" date="2011" name="Biochem. J.">
        <title>The characterization of human adenylate kinases 7 and 8 demonstrates differences in kinetic parameters and structural organization among the family of adenylate kinase isoenzymes.</title>
        <authorList>
            <person name="Panayiotou C."/>
            <person name="Solaroli N."/>
            <person name="Xu Y."/>
            <person name="Johansson M."/>
            <person name="Karlsson A."/>
        </authorList>
    </citation>
    <scope>CATALYTIC ACTIVITY</scope>
    <scope>BIOPHYSICOCHEMICAL PROPERTIES</scope>
</reference>
<reference key="8">
    <citation type="journal article" date="2011" name="BMC Syst. Biol.">
        <title>Initial characterization of the human central proteome.</title>
        <authorList>
            <person name="Burkard T.R."/>
            <person name="Planyavsky M."/>
            <person name="Kaupe I."/>
            <person name="Breitwieser F.P."/>
            <person name="Buerckstuemmer T."/>
            <person name="Bennett K.L."/>
            <person name="Superti-Furga G."/>
            <person name="Colinge J."/>
        </authorList>
    </citation>
    <scope>IDENTIFICATION BY MASS SPECTROMETRY [LARGE SCALE ANALYSIS]</scope>
</reference>
<reference key="9">
    <citation type="journal article" date="2013" name="Int. J. Biochem. Cell Biol.">
        <title>The human adenylate kinase 9 is a nucleoside mono- and diphosphate kinase.</title>
        <authorList>
            <person name="Amiri M."/>
            <person name="Conserva F."/>
            <person name="Panayiotou C."/>
            <person name="Karlsson A."/>
            <person name="Solaroli N."/>
        </authorList>
    </citation>
    <scope>FUNCTION</scope>
    <scope>CATALYTIC ACTIVITY</scope>
</reference>
<reference key="10">
    <citation type="journal article" date="2013" name="J. Proteome Res.">
        <title>Toward a comprehensive characterization of a human cancer cell phosphoproteome.</title>
        <authorList>
            <person name="Zhou H."/>
            <person name="Di Palma S."/>
            <person name="Preisinger C."/>
            <person name="Peng M."/>
            <person name="Polat A.N."/>
            <person name="Heck A.J."/>
            <person name="Mohammed S."/>
        </authorList>
    </citation>
    <scope>PHOSPHORYLATION [LARGE SCALE ANALYSIS] AT SER-38</scope>
    <scope>IDENTIFICATION BY MASS SPECTROMETRY [LARGE SCALE ANALYSIS]</scope>
    <source>
        <tissue>Erythroleukemia</tissue>
    </source>
</reference>
<reference key="11">
    <citation type="journal article" date="2014" name="J. Proteomics">
        <title>An enzyme assisted RP-RPLC approach for in-depth analysis of human liver phosphoproteome.</title>
        <authorList>
            <person name="Bian Y."/>
            <person name="Song C."/>
            <person name="Cheng K."/>
            <person name="Dong M."/>
            <person name="Wang F."/>
            <person name="Huang J."/>
            <person name="Sun D."/>
            <person name="Wang L."/>
            <person name="Ye M."/>
            <person name="Zou H."/>
        </authorList>
    </citation>
    <scope>PHOSPHORYLATION [LARGE SCALE ANALYSIS] AT SER-38</scope>
    <scope>IDENTIFICATION BY MASS SPECTROMETRY [LARGE SCALE ANALYSIS]</scope>
    <source>
        <tissue>Liver</tissue>
    </source>
</reference>
<reference key="12">
    <citation type="submission" date="2007-03" db="PDB data bank">
        <title>Crystal structure of human AK1A in complex with AP5A.</title>
        <authorList>
            <consortium name="Structural genomics consortium (SGC)"/>
        </authorList>
    </citation>
    <scope>X-RAY CRYSTALLOGRAPHY (1.7 ANGSTROMS) IN COMPLEX WITH BI-SUBSTRATE ANALOG AP5A</scope>
</reference>
<reference key="13">
    <citation type="submission" date="2005-12" db="PDB data bank">
        <title>Structure of adenylate kinase 1 in complex with P1, P4-di(adenosine)tetraphosphate.</title>
        <authorList>
            <consortium name="Structural genomics consortium (SGC)"/>
        </authorList>
    </citation>
    <scope>X-RAY CRYSTALLOGRAPHY (1.71 ANGSTROMS) IN COMPLEX WITH BI-SUBSTRATE ANALOG AP4A</scope>
</reference>
<reference key="14">
    <citation type="journal article" date="1997" name="Br. J. Haematol.">
        <title>Severe erythrocyte adenylate kinase deficiency due to homozygous A--&gt;G substitution at codon 164 of human AK1 gene associated with chronic haemolytic anaemia.</title>
        <authorList>
            <person name="Qualtieri A."/>
            <person name="Pedace V."/>
            <person name="Bisconte M.G."/>
            <person name="Bria M."/>
            <person name="Gulino B."/>
            <person name="Andreoli V."/>
            <person name="Brancati C."/>
        </authorList>
    </citation>
    <scope>VARIANT CNSHA3 CYS-164</scope>
</reference>
<reference key="15">
    <citation type="journal article" date="2003" name="Blood">
        <title>Red cell adenylate kinase deficiency: molecular study of 3 new mutations (118G&gt;A, 190G&gt;A, and GAC deletion) associated with hereditary nonspherocytic hemolytic anemia.</title>
        <authorList>
            <person name="Corrons J.-L."/>
            <person name="Garcia E."/>
            <person name="Tusell J.J."/>
            <person name="Varughese K.I."/>
            <person name="West C."/>
            <person name="Beutler E."/>
        </authorList>
    </citation>
    <scope>VARIANTS CNSHA3 ARG-40; ARG-64 AND ASP-140 DEL</scope>
</reference>